<feature type="chain" id="PRO_1000009018" description="Adenylyl-sulfate kinase">
    <location>
        <begin position="1"/>
        <end position="208"/>
    </location>
</feature>
<feature type="active site" description="Phosphoserine intermediate" evidence="1">
    <location>
        <position position="105"/>
    </location>
</feature>
<feature type="binding site" evidence="1">
    <location>
        <begin position="31"/>
        <end position="38"/>
    </location>
    <ligand>
        <name>ATP</name>
        <dbReference type="ChEBI" id="CHEBI:30616"/>
    </ligand>
</feature>
<protein>
    <recommendedName>
        <fullName evidence="1">Adenylyl-sulfate kinase</fullName>
        <ecNumber evidence="1">2.7.1.25</ecNumber>
    </recommendedName>
    <alternativeName>
        <fullName evidence="1">APS kinase</fullName>
    </alternativeName>
    <alternativeName>
        <fullName evidence="1">ATP adenosine-5'-phosphosulfate 3'-phosphotransferase</fullName>
    </alternativeName>
    <alternativeName>
        <fullName evidence="1">Adenosine-5'-phosphosulfate kinase</fullName>
    </alternativeName>
</protein>
<keyword id="KW-0067">ATP-binding</keyword>
<keyword id="KW-0418">Kinase</keyword>
<keyword id="KW-0547">Nucleotide-binding</keyword>
<keyword id="KW-0597">Phosphoprotein</keyword>
<keyword id="KW-0808">Transferase</keyword>
<proteinExistence type="inferred from homology"/>
<name>CYSC_PSEE4</name>
<accession>Q1I2K4</accession>
<sequence>MKDLHWHGHATSRLARVEMNGHRPCTIWFTGLSGSGKSTIANALDGWLHRRGCHTYVLDGDNVRQGLNKDLGFSEQDRVENIRRVGEVAKLFNDAGLIVSCAFISPYEKDRHLVRQLLNEDEYVEVFLSTSLADCERRDPKGLYRKARAGELANFTGIDSPYEPPVRPNLAFDTSTHTVNEVVGAIFDYLVAKGIVRQHGAVGRASVG</sequence>
<organism>
    <name type="scientific">Pseudomonas entomophila (strain L48)</name>
    <dbReference type="NCBI Taxonomy" id="384676"/>
    <lineage>
        <taxon>Bacteria</taxon>
        <taxon>Pseudomonadati</taxon>
        <taxon>Pseudomonadota</taxon>
        <taxon>Gammaproteobacteria</taxon>
        <taxon>Pseudomonadales</taxon>
        <taxon>Pseudomonadaceae</taxon>
        <taxon>Pseudomonas</taxon>
    </lineage>
</organism>
<gene>
    <name evidence="1" type="primary">cysC</name>
    <name type="ordered locus">PSEEN5524</name>
</gene>
<reference key="1">
    <citation type="journal article" date="2006" name="Nat. Biotechnol.">
        <title>Complete genome sequence of the entomopathogenic and metabolically versatile soil bacterium Pseudomonas entomophila.</title>
        <authorList>
            <person name="Vodovar N."/>
            <person name="Vallenet D."/>
            <person name="Cruveiller S."/>
            <person name="Rouy Z."/>
            <person name="Barbe V."/>
            <person name="Acosta C."/>
            <person name="Cattolico L."/>
            <person name="Jubin C."/>
            <person name="Lajus A."/>
            <person name="Segurens B."/>
            <person name="Vacherie B."/>
            <person name="Wincker P."/>
            <person name="Weissenbach J."/>
            <person name="Lemaitre B."/>
            <person name="Medigue C."/>
            <person name="Boccard F."/>
        </authorList>
    </citation>
    <scope>NUCLEOTIDE SEQUENCE [LARGE SCALE GENOMIC DNA]</scope>
    <source>
        <strain>L48</strain>
    </source>
</reference>
<comment type="function">
    <text evidence="1">Catalyzes the synthesis of activated sulfate.</text>
</comment>
<comment type="catalytic activity">
    <reaction evidence="1">
        <text>adenosine 5'-phosphosulfate + ATP = 3'-phosphoadenylyl sulfate + ADP + H(+)</text>
        <dbReference type="Rhea" id="RHEA:24152"/>
        <dbReference type="ChEBI" id="CHEBI:15378"/>
        <dbReference type="ChEBI" id="CHEBI:30616"/>
        <dbReference type="ChEBI" id="CHEBI:58243"/>
        <dbReference type="ChEBI" id="CHEBI:58339"/>
        <dbReference type="ChEBI" id="CHEBI:456216"/>
        <dbReference type="EC" id="2.7.1.25"/>
    </reaction>
</comment>
<comment type="pathway">
    <text evidence="1">Sulfur metabolism; hydrogen sulfide biosynthesis; sulfite from sulfate: step 2/3.</text>
</comment>
<comment type="similarity">
    <text evidence="1">Belongs to the APS kinase family.</text>
</comment>
<dbReference type="EC" id="2.7.1.25" evidence="1"/>
<dbReference type="EMBL" id="CT573326">
    <property type="protein sequence ID" value="CAK18132.1"/>
    <property type="molecule type" value="Genomic_DNA"/>
</dbReference>
<dbReference type="RefSeq" id="WP_011536484.1">
    <property type="nucleotide sequence ID" value="NC_008027.1"/>
</dbReference>
<dbReference type="SMR" id="Q1I2K4"/>
<dbReference type="STRING" id="384676.PSEEN5524"/>
<dbReference type="GeneID" id="32808426"/>
<dbReference type="KEGG" id="pen:PSEEN5524"/>
<dbReference type="eggNOG" id="COG0529">
    <property type="taxonomic scope" value="Bacteria"/>
</dbReference>
<dbReference type="HOGENOM" id="CLU_046932_1_0_6"/>
<dbReference type="OrthoDB" id="9804504at2"/>
<dbReference type="UniPathway" id="UPA00140">
    <property type="reaction ID" value="UER00205"/>
</dbReference>
<dbReference type="Proteomes" id="UP000000658">
    <property type="component" value="Chromosome"/>
</dbReference>
<dbReference type="GO" id="GO:0004020">
    <property type="term" value="F:adenylylsulfate kinase activity"/>
    <property type="evidence" value="ECO:0007669"/>
    <property type="project" value="UniProtKB-UniRule"/>
</dbReference>
<dbReference type="GO" id="GO:0005524">
    <property type="term" value="F:ATP binding"/>
    <property type="evidence" value="ECO:0007669"/>
    <property type="project" value="UniProtKB-UniRule"/>
</dbReference>
<dbReference type="GO" id="GO:0070814">
    <property type="term" value="P:hydrogen sulfide biosynthetic process"/>
    <property type="evidence" value="ECO:0007669"/>
    <property type="project" value="UniProtKB-UniRule"/>
</dbReference>
<dbReference type="GO" id="GO:0000103">
    <property type="term" value="P:sulfate assimilation"/>
    <property type="evidence" value="ECO:0007669"/>
    <property type="project" value="UniProtKB-UniRule"/>
</dbReference>
<dbReference type="CDD" id="cd02027">
    <property type="entry name" value="APSK"/>
    <property type="match status" value="1"/>
</dbReference>
<dbReference type="FunFam" id="3.40.50.300:FF:000212">
    <property type="entry name" value="Adenylyl-sulfate kinase"/>
    <property type="match status" value="1"/>
</dbReference>
<dbReference type="Gene3D" id="3.40.50.300">
    <property type="entry name" value="P-loop containing nucleotide triphosphate hydrolases"/>
    <property type="match status" value="1"/>
</dbReference>
<dbReference type="HAMAP" id="MF_00065">
    <property type="entry name" value="Adenylyl_sulf_kinase"/>
    <property type="match status" value="1"/>
</dbReference>
<dbReference type="InterPro" id="IPR002891">
    <property type="entry name" value="APS_kinase"/>
</dbReference>
<dbReference type="InterPro" id="IPR027417">
    <property type="entry name" value="P-loop_NTPase"/>
</dbReference>
<dbReference type="NCBIfam" id="TIGR00455">
    <property type="entry name" value="apsK"/>
    <property type="match status" value="1"/>
</dbReference>
<dbReference type="NCBIfam" id="NF003013">
    <property type="entry name" value="PRK03846.1"/>
    <property type="match status" value="1"/>
</dbReference>
<dbReference type="PANTHER" id="PTHR11055:SF63">
    <property type="entry name" value="ADENYLYL-SULFATE KINASE 1, CHLOROPLASTIC"/>
    <property type="match status" value="1"/>
</dbReference>
<dbReference type="PANTHER" id="PTHR11055">
    <property type="entry name" value="BIFUNCTIONAL 3'-PHOSPHOADENOSINE 5'-PHOSPHOSULFATE SYNTHASE"/>
    <property type="match status" value="1"/>
</dbReference>
<dbReference type="Pfam" id="PF01583">
    <property type="entry name" value="APS_kinase"/>
    <property type="match status" value="1"/>
</dbReference>
<dbReference type="SUPFAM" id="SSF52540">
    <property type="entry name" value="P-loop containing nucleoside triphosphate hydrolases"/>
    <property type="match status" value="1"/>
</dbReference>
<evidence type="ECO:0000255" key="1">
    <source>
        <dbReference type="HAMAP-Rule" id="MF_00065"/>
    </source>
</evidence>